<keyword id="KW-0028">Amino-acid biosynthesis</keyword>
<keyword id="KW-0963">Cytoplasm</keyword>
<keyword id="KW-0554">One-carbon metabolism</keyword>
<keyword id="KW-0663">Pyridoxal phosphate</keyword>
<keyword id="KW-1185">Reference proteome</keyword>
<keyword id="KW-0808">Transferase</keyword>
<protein>
    <recommendedName>
        <fullName evidence="1">Serine hydroxymethyltransferase</fullName>
        <shortName evidence="1">SHMT</shortName>
        <shortName evidence="1">Serine methylase</shortName>
        <ecNumber evidence="1">2.1.2.1</ecNumber>
    </recommendedName>
</protein>
<dbReference type="EC" id="2.1.2.1" evidence="1"/>
<dbReference type="EMBL" id="CP000853">
    <property type="protein sequence ID" value="ABW19240.1"/>
    <property type="molecule type" value="Genomic_DNA"/>
</dbReference>
<dbReference type="RefSeq" id="WP_012159552.1">
    <property type="nucleotide sequence ID" value="NC_009922.1"/>
</dbReference>
<dbReference type="SMR" id="A8MGL7"/>
<dbReference type="STRING" id="350688.Clos_1700"/>
<dbReference type="KEGG" id="aoe:Clos_1700"/>
<dbReference type="eggNOG" id="COG0112">
    <property type="taxonomic scope" value="Bacteria"/>
</dbReference>
<dbReference type="HOGENOM" id="CLU_022477_2_1_9"/>
<dbReference type="OrthoDB" id="9803846at2"/>
<dbReference type="UniPathway" id="UPA00193"/>
<dbReference type="UniPathway" id="UPA00288">
    <property type="reaction ID" value="UER01023"/>
</dbReference>
<dbReference type="Proteomes" id="UP000000269">
    <property type="component" value="Chromosome"/>
</dbReference>
<dbReference type="GO" id="GO:0005829">
    <property type="term" value="C:cytosol"/>
    <property type="evidence" value="ECO:0007669"/>
    <property type="project" value="TreeGrafter"/>
</dbReference>
<dbReference type="GO" id="GO:0004372">
    <property type="term" value="F:glycine hydroxymethyltransferase activity"/>
    <property type="evidence" value="ECO:0007669"/>
    <property type="project" value="UniProtKB-UniRule"/>
</dbReference>
<dbReference type="GO" id="GO:0030170">
    <property type="term" value="F:pyridoxal phosphate binding"/>
    <property type="evidence" value="ECO:0007669"/>
    <property type="project" value="UniProtKB-UniRule"/>
</dbReference>
<dbReference type="GO" id="GO:0019264">
    <property type="term" value="P:glycine biosynthetic process from serine"/>
    <property type="evidence" value="ECO:0007669"/>
    <property type="project" value="UniProtKB-UniRule"/>
</dbReference>
<dbReference type="GO" id="GO:0035999">
    <property type="term" value="P:tetrahydrofolate interconversion"/>
    <property type="evidence" value="ECO:0007669"/>
    <property type="project" value="UniProtKB-UniRule"/>
</dbReference>
<dbReference type="CDD" id="cd00378">
    <property type="entry name" value="SHMT"/>
    <property type="match status" value="1"/>
</dbReference>
<dbReference type="FunFam" id="3.40.640.10:FF:000001">
    <property type="entry name" value="Serine hydroxymethyltransferase"/>
    <property type="match status" value="1"/>
</dbReference>
<dbReference type="FunFam" id="3.90.1150.10:FF:000003">
    <property type="entry name" value="Serine hydroxymethyltransferase"/>
    <property type="match status" value="1"/>
</dbReference>
<dbReference type="Gene3D" id="3.90.1150.10">
    <property type="entry name" value="Aspartate Aminotransferase, domain 1"/>
    <property type="match status" value="1"/>
</dbReference>
<dbReference type="Gene3D" id="3.40.640.10">
    <property type="entry name" value="Type I PLP-dependent aspartate aminotransferase-like (Major domain)"/>
    <property type="match status" value="1"/>
</dbReference>
<dbReference type="HAMAP" id="MF_00051">
    <property type="entry name" value="SHMT"/>
    <property type="match status" value="1"/>
</dbReference>
<dbReference type="InterPro" id="IPR015424">
    <property type="entry name" value="PyrdxlP-dep_Trfase"/>
</dbReference>
<dbReference type="InterPro" id="IPR015421">
    <property type="entry name" value="PyrdxlP-dep_Trfase_major"/>
</dbReference>
<dbReference type="InterPro" id="IPR015422">
    <property type="entry name" value="PyrdxlP-dep_Trfase_small"/>
</dbReference>
<dbReference type="InterPro" id="IPR001085">
    <property type="entry name" value="Ser_HO-MeTrfase"/>
</dbReference>
<dbReference type="InterPro" id="IPR049943">
    <property type="entry name" value="Ser_HO-MeTrfase-like"/>
</dbReference>
<dbReference type="InterPro" id="IPR019798">
    <property type="entry name" value="Ser_HO-MeTrfase_PLP_BS"/>
</dbReference>
<dbReference type="InterPro" id="IPR039429">
    <property type="entry name" value="SHMT-like_dom"/>
</dbReference>
<dbReference type="NCBIfam" id="NF000586">
    <property type="entry name" value="PRK00011.1"/>
    <property type="match status" value="1"/>
</dbReference>
<dbReference type="PANTHER" id="PTHR11680">
    <property type="entry name" value="SERINE HYDROXYMETHYLTRANSFERASE"/>
    <property type="match status" value="1"/>
</dbReference>
<dbReference type="PANTHER" id="PTHR11680:SF35">
    <property type="entry name" value="SERINE HYDROXYMETHYLTRANSFERASE 1"/>
    <property type="match status" value="1"/>
</dbReference>
<dbReference type="Pfam" id="PF00464">
    <property type="entry name" value="SHMT"/>
    <property type="match status" value="1"/>
</dbReference>
<dbReference type="PIRSF" id="PIRSF000412">
    <property type="entry name" value="SHMT"/>
    <property type="match status" value="1"/>
</dbReference>
<dbReference type="SUPFAM" id="SSF53383">
    <property type="entry name" value="PLP-dependent transferases"/>
    <property type="match status" value="1"/>
</dbReference>
<dbReference type="PROSITE" id="PS00096">
    <property type="entry name" value="SHMT"/>
    <property type="match status" value="1"/>
</dbReference>
<comment type="function">
    <text evidence="1">Catalyzes the reversible interconversion of serine and glycine with tetrahydrofolate (THF) serving as the one-carbon carrier. This reaction serves as the major source of one-carbon groups required for the biosynthesis of purines, thymidylate, methionine, and other important biomolecules. Also exhibits THF-independent aldolase activity toward beta-hydroxyamino acids, producing glycine and aldehydes, via a retro-aldol mechanism.</text>
</comment>
<comment type="catalytic activity">
    <reaction evidence="1">
        <text>(6R)-5,10-methylene-5,6,7,8-tetrahydrofolate + glycine + H2O = (6S)-5,6,7,8-tetrahydrofolate + L-serine</text>
        <dbReference type="Rhea" id="RHEA:15481"/>
        <dbReference type="ChEBI" id="CHEBI:15377"/>
        <dbReference type="ChEBI" id="CHEBI:15636"/>
        <dbReference type="ChEBI" id="CHEBI:33384"/>
        <dbReference type="ChEBI" id="CHEBI:57305"/>
        <dbReference type="ChEBI" id="CHEBI:57453"/>
        <dbReference type="EC" id="2.1.2.1"/>
    </reaction>
</comment>
<comment type="cofactor">
    <cofactor evidence="1">
        <name>pyridoxal 5'-phosphate</name>
        <dbReference type="ChEBI" id="CHEBI:597326"/>
    </cofactor>
</comment>
<comment type="pathway">
    <text evidence="1">One-carbon metabolism; tetrahydrofolate interconversion.</text>
</comment>
<comment type="pathway">
    <text evidence="1">Amino-acid biosynthesis; glycine biosynthesis; glycine from L-serine: step 1/1.</text>
</comment>
<comment type="subunit">
    <text evidence="1">Homodimer.</text>
</comment>
<comment type="subcellular location">
    <subcellularLocation>
        <location evidence="1">Cytoplasm</location>
    </subcellularLocation>
</comment>
<comment type="similarity">
    <text evidence="1">Belongs to the SHMT family.</text>
</comment>
<feature type="chain" id="PRO_1000057363" description="Serine hydroxymethyltransferase">
    <location>
        <begin position="1"/>
        <end position="410"/>
    </location>
</feature>
<feature type="binding site" evidence="1">
    <location>
        <position position="119"/>
    </location>
    <ligand>
        <name>(6S)-5,6,7,8-tetrahydrofolate</name>
        <dbReference type="ChEBI" id="CHEBI:57453"/>
    </ligand>
</feature>
<feature type="binding site" evidence="1">
    <location>
        <begin position="123"/>
        <end position="125"/>
    </location>
    <ligand>
        <name>(6S)-5,6,7,8-tetrahydrofolate</name>
        <dbReference type="ChEBI" id="CHEBI:57453"/>
    </ligand>
</feature>
<feature type="binding site" evidence="1">
    <location>
        <begin position="351"/>
        <end position="353"/>
    </location>
    <ligand>
        <name>(6S)-5,6,7,8-tetrahydrofolate</name>
        <dbReference type="ChEBI" id="CHEBI:57453"/>
    </ligand>
</feature>
<feature type="site" description="Plays an important role in substrate specificity" evidence="1">
    <location>
        <position position="227"/>
    </location>
</feature>
<feature type="modified residue" description="N6-(pyridoxal phosphate)lysine" evidence="1">
    <location>
        <position position="228"/>
    </location>
</feature>
<evidence type="ECO:0000255" key="1">
    <source>
        <dbReference type="HAMAP-Rule" id="MF_00051"/>
    </source>
</evidence>
<name>GLYA_ALKOO</name>
<accession>A8MGL7</accession>
<organism>
    <name type="scientific">Alkaliphilus oremlandii (strain OhILAs)</name>
    <name type="common">Clostridium oremlandii (strain OhILAs)</name>
    <dbReference type="NCBI Taxonomy" id="350688"/>
    <lineage>
        <taxon>Bacteria</taxon>
        <taxon>Bacillati</taxon>
        <taxon>Bacillota</taxon>
        <taxon>Clostridia</taxon>
        <taxon>Peptostreptococcales</taxon>
        <taxon>Natronincolaceae</taxon>
        <taxon>Alkaliphilus</taxon>
    </lineage>
</organism>
<reference key="1">
    <citation type="submission" date="2007-10" db="EMBL/GenBank/DDBJ databases">
        <title>Complete genome of Alkaliphilus oremlandii OhILAs.</title>
        <authorList>
            <person name="Copeland A."/>
            <person name="Lucas S."/>
            <person name="Lapidus A."/>
            <person name="Barry K."/>
            <person name="Detter J.C."/>
            <person name="Glavina del Rio T."/>
            <person name="Hammon N."/>
            <person name="Israni S."/>
            <person name="Dalin E."/>
            <person name="Tice H."/>
            <person name="Pitluck S."/>
            <person name="Chain P."/>
            <person name="Malfatti S."/>
            <person name="Shin M."/>
            <person name="Vergez L."/>
            <person name="Schmutz J."/>
            <person name="Larimer F."/>
            <person name="Land M."/>
            <person name="Hauser L."/>
            <person name="Kyrpides N."/>
            <person name="Mikhailova N."/>
            <person name="Stolz J.F."/>
            <person name="Dawson A."/>
            <person name="Fisher E."/>
            <person name="Crable B."/>
            <person name="Perera E."/>
            <person name="Lisak J."/>
            <person name="Ranganathan M."/>
            <person name="Basu P."/>
            <person name="Richardson P."/>
        </authorList>
    </citation>
    <scope>NUCLEOTIDE SEQUENCE [LARGE SCALE GENOMIC DNA]</scope>
    <source>
        <strain>OhILAs</strain>
    </source>
</reference>
<proteinExistence type="inferred from homology"/>
<sequence>MNFDTLKIADPEIYEVIQKETKRQRGNIELIASENFVTEAVMEAMGSQLTNKYAEGYPGKRYYGGCEEVDVAEDLARDRLKKLFNAEHANVQPHSGANANIGVYFAILKPGDTVLGMNLSHGGHLTHGSPVNISGTYYNFVDYGVDKETHLINYEEVRRIANEIKPKLIVAGASAFPRKIDFKKFREIADEVGAYLMVDMAHIAGLVAAGLHENPCDYADFVTTTTHKTLRGPRGGAILCKEKYAKMIDKAIFPGLQGGPLMHVIAAKAVSFKEALSPEFKAYQEQVIKNAAKLGEELKSRGFNLVSGGTDNHLLLLDLRNKNITGKDAEKLLDEVGVTVNKNTIPYDPESPFVTSGIRIGTPAVTTRGMKEDDMVTIAEIIGTIIDHPERIDEVSSMVKNLCEKFKLYE</sequence>
<gene>
    <name evidence="1" type="primary">glyA</name>
    <name type="ordered locus">Clos_1700</name>
</gene>